<reference key="1">
    <citation type="journal article" date="2003" name="Proc. Natl. Acad. Sci. U.S.A.">
        <title>Reductive genome evolution in Buchnera aphidicola.</title>
        <authorList>
            <person name="van Ham R.C.H.J."/>
            <person name="Kamerbeek J."/>
            <person name="Palacios C."/>
            <person name="Rausell C."/>
            <person name="Abascal F."/>
            <person name="Bastolla U."/>
            <person name="Fernandez J.M."/>
            <person name="Jimenez L."/>
            <person name="Postigo M."/>
            <person name="Silva F.J."/>
            <person name="Tamames J."/>
            <person name="Viguera E."/>
            <person name="Latorre A."/>
            <person name="Valencia A."/>
            <person name="Moran F."/>
            <person name="Moya A."/>
        </authorList>
    </citation>
    <scope>NUCLEOTIDE SEQUENCE [LARGE SCALE GENOMIC DNA]</scope>
    <source>
        <strain>Bp</strain>
    </source>
</reference>
<organism>
    <name type="scientific">Buchnera aphidicola subsp. Baizongia pistaciae (strain Bp)</name>
    <dbReference type="NCBI Taxonomy" id="224915"/>
    <lineage>
        <taxon>Bacteria</taxon>
        <taxon>Pseudomonadati</taxon>
        <taxon>Pseudomonadota</taxon>
        <taxon>Gammaproteobacteria</taxon>
        <taxon>Enterobacterales</taxon>
        <taxon>Erwiniaceae</taxon>
        <taxon>Buchnera</taxon>
    </lineage>
</organism>
<proteinExistence type="inferred from homology"/>
<sequence length="244" mass="27210">MVITLLNLNKKHYLLILFFILLNGCSIDKNIILNKKQKQHKIFNLPITHTSKETHNFNYQDNKQSNNNYLEPLFEDYKPRNVGDILTIILQENTSASNSVSNNSIHNGNSNFDIDIGNARAFDDPNGILNKIELNSSIKNNFLGKGSSSANNTFVGLITVIVDRILPNGNLEVSGSKNITINDGIEKICFYGIVNPHTISKNNSVLSTKVANTNITYISSGPINIGSKINWLQRLFVSLFTLSK</sequence>
<gene>
    <name type="primary">flgH</name>
    <name type="ordered locus">bbp_314</name>
</gene>
<accession>Q89AH6</accession>
<feature type="signal peptide" evidence="2">
    <location>
        <begin position="1"/>
        <end position="24"/>
    </location>
</feature>
<feature type="chain" id="PRO_0000009433" description="Flagellar L-ring protein">
    <location>
        <begin position="25"/>
        <end position="244"/>
    </location>
</feature>
<feature type="lipid moiety-binding region" description="N-palmitoyl cysteine" evidence="2">
    <location>
        <position position="25"/>
    </location>
</feature>
<feature type="lipid moiety-binding region" description="S-diacylglycerol cysteine" evidence="2">
    <location>
        <position position="25"/>
    </location>
</feature>
<protein>
    <recommendedName>
        <fullName>Flagellar L-ring protein</fullName>
    </recommendedName>
    <alternativeName>
        <fullName>Basal body L-ring protein</fullName>
    </alternativeName>
</protein>
<evidence type="ECO:0000250" key="1"/>
<evidence type="ECO:0000255" key="2"/>
<evidence type="ECO:0000305" key="3"/>
<comment type="function">
    <text evidence="1">Assembles around the rod to form the L-ring and probably protects the motor/basal body from shearing forces during rotation.</text>
</comment>
<comment type="subunit">
    <text evidence="1">The basal body constitutes a major portion of the flagellar organelle and consists of four rings (L,P,S, and M) mounted on a central rod.</text>
</comment>
<comment type="subcellular location">
    <subcellularLocation>
        <location evidence="1">Cell membrane</location>
        <topology evidence="1">Lipid-anchor</topology>
    </subcellularLocation>
    <subcellularLocation>
        <location evidence="1">Bacterial flagellum basal body</location>
    </subcellularLocation>
</comment>
<comment type="similarity">
    <text evidence="3">Belongs to the FlgH family.</text>
</comment>
<dbReference type="EMBL" id="AE016826">
    <property type="protein sequence ID" value="AAO27036.1"/>
    <property type="molecule type" value="Genomic_DNA"/>
</dbReference>
<dbReference type="RefSeq" id="WP_011091437.1">
    <property type="nucleotide sequence ID" value="NC_004545.1"/>
</dbReference>
<dbReference type="SMR" id="Q89AH6"/>
<dbReference type="STRING" id="224915.bbp_314"/>
<dbReference type="KEGG" id="bab:bbp_314"/>
<dbReference type="eggNOG" id="COG2063">
    <property type="taxonomic scope" value="Bacteria"/>
</dbReference>
<dbReference type="HOGENOM" id="CLU_069313_0_0_6"/>
<dbReference type="OrthoDB" id="9789463at2"/>
<dbReference type="Proteomes" id="UP000000601">
    <property type="component" value="Chromosome"/>
</dbReference>
<dbReference type="GO" id="GO:0009427">
    <property type="term" value="C:bacterial-type flagellum basal body, distal rod, L ring"/>
    <property type="evidence" value="ECO:0007669"/>
    <property type="project" value="InterPro"/>
</dbReference>
<dbReference type="GO" id="GO:0009279">
    <property type="term" value="C:cell outer membrane"/>
    <property type="evidence" value="ECO:0007669"/>
    <property type="project" value="UniProtKB-UniRule"/>
</dbReference>
<dbReference type="GO" id="GO:0005886">
    <property type="term" value="C:plasma membrane"/>
    <property type="evidence" value="ECO:0007669"/>
    <property type="project" value="UniProtKB-SubCell"/>
</dbReference>
<dbReference type="GO" id="GO:0003774">
    <property type="term" value="F:cytoskeletal motor activity"/>
    <property type="evidence" value="ECO:0007669"/>
    <property type="project" value="InterPro"/>
</dbReference>
<dbReference type="GO" id="GO:0071973">
    <property type="term" value="P:bacterial-type flagellum-dependent cell motility"/>
    <property type="evidence" value="ECO:0007669"/>
    <property type="project" value="InterPro"/>
</dbReference>
<dbReference type="HAMAP" id="MF_00415">
    <property type="entry name" value="FlgH"/>
    <property type="match status" value="1"/>
</dbReference>
<dbReference type="InterPro" id="IPR000527">
    <property type="entry name" value="Flag_Lring"/>
</dbReference>
<dbReference type="PANTHER" id="PTHR34933">
    <property type="entry name" value="FLAGELLAR L-RING PROTEIN"/>
    <property type="match status" value="1"/>
</dbReference>
<dbReference type="PANTHER" id="PTHR34933:SF3">
    <property type="entry name" value="FLAGELLAR L-RING PROTEIN"/>
    <property type="match status" value="1"/>
</dbReference>
<dbReference type="Pfam" id="PF02107">
    <property type="entry name" value="FlgH"/>
    <property type="match status" value="1"/>
</dbReference>
<dbReference type="PRINTS" id="PR01008">
    <property type="entry name" value="FLGLRINGFLGH"/>
</dbReference>
<keyword id="KW-0975">Bacterial flagellum</keyword>
<keyword id="KW-1003">Cell membrane</keyword>
<keyword id="KW-0449">Lipoprotein</keyword>
<keyword id="KW-0472">Membrane</keyword>
<keyword id="KW-0564">Palmitate</keyword>
<keyword id="KW-1185">Reference proteome</keyword>
<keyword id="KW-0732">Signal</keyword>
<name>FLGH_BUCBP</name>